<evidence type="ECO:0000255" key="1">
    <source>
        <dbReference type="HAMAP-Rule" id="MF_00379"/>
    </source>
</evidence>
<sequence length="454" mass="49106">MSHNDTIVAQATPPGRGGVGILRISGLKARDVAQEVLGKLPKPRYADYLPFKDVDGSALDQGIALWFPGPNSFTGEDVLELQGHGGPVILDLLLKRILTLPGVRIARPGEFSERAFLNDKLDLAQAEAIADLIDASSEQAARSALNSLQGAFSARVNHLVEALTHLRIYVEAAIDFPDEEIDFLSDGKIEAQLNGVIADLDAVRTEARQGSLLREGMKVVIAGRPNAGKSSLLNALAGREAAIVTDIAGTTRDVLREHIHIDGMPLHIIDTAGLRDASDEVERIGIERAWQEIEQADRVLFMVDGTTTDAVDPADIWPDFIARLPKNLPITVVRNKADITGETLGISEVNGHSLVRLSARTGEGIDVLRNHLKQSMGFDTNMEGGFLARRRHLQALAEAAEHLEQGKAQLLGAWAGELLAEELRLAQQSLSEITGEFTSDDLLGRIFSSFCIGK</sequence>
<comment type="function">
    <text evidence="1">Exhibits a very high intrinsic GTPase hydrolysis rate. Involved in the addition of a carboxymethylaminomethyl (cmnm) group at the wobble position (U34) of certain tRNAs, forming tRNA-cmnm(5)s(2)U34.</text>
</comment>
<comment type="cofactor">
    <cofactor evidence="1">
        <name>K(+)</name>
        <dbReference type="ChEBI" id="CHEBI:29103"/>
    </cofactor>
    <text evidence="1">Binds 1 potassium ion per subunit.</text>
</comment>
<comment type="subunit">
    <text evidence="1">Homodimer. Heterotetramer of two MnmE and two MnmG subunits.</text>
</comment>
<comment type="subcellular location">
    <subcellularLocation>
        <location evidence="1">Cytoplasm</location>
    </subcellularLocation>
</comment>
<comment type="similarity">
    <text evidence="1">Belongs to the TRAFAC class TrmE-Era-EngA-EngB-Septin-like GTPase superfamily. TrmE GTPase family.</text>
</comment>
<keyword id="KW-0963">Cytoplasm</keyword>
<keyword id="KW-0342">GTP-binding</keyword>
<keyword id="KW-0378">Hydrolase</keyword>
<keyword id="KW-0460">Magnesium</keyword>
<keyword id="KW-0479">Metal-binding</keyword>
<keyword id="KW-0547">Nucleotide-binding</keyword>
<keyword id="KW-0630">Potassium</keyword>
<keyword id="KW-1185">Reference proteome</keyword>
<keyword id="KW-0819">tRNA processing</keyword>
<dbReference type="EC" id="3.6.-.-" evidence="1"/>
<dbReference type="EMBL" id="AE006468">
    <property type="protein sequence ID" value="AAL22702.1"/>
    <property type="molecule type" value="Genomic_DNA"/>
</dbReference>
<dbReference type="RefSeq" id="NP_462743.1">
    <property type="nucleotide sequence ID" value="NC_003197.2"/>
</dbReference>
<dbReference type="RefSeq" id="WP_000019077.1">
    <property type="nucleotide sequence ID" value="NC_003197.2"/>
</dbReference>
<dbReference type="SMR" id="Q8ZKY3"/>
<dbReference type="STRING" id="99287.STM3843"/>
<dbReference type="PaxDb" id="99287-STM3843"/>
<dbReference type="GeneID" id="1255370"/>
<dbReference type="KEGG" id="stm:STM3843"/>
<dbReference type="PATRIC" id="fig|99287.12.peg.4070"/>
<dbReference type="HOGENOM" id="CLU_019624_4_1_6"/>
<dbReference type="OMA" id="EFHCHGG"/>
<dbReference type="PhylomeDB" id="Q8ZKY3"/>
<dbReference type="BioCyc" id="SENT99287:STM3843-MONOMER"/>
<dbReference type="Proteomes" id="UP000001014">
    <property type="component" value="Chromosome"/>
</dbReference>
<dbReference type="GO" id="GO:0005737">
    <property type="term" value="C:cytoplasm"/>
    <property type="evidence" value="ECO:0000318"/>
    <property type="project" value="GO_Central"/>
</dbReference>
<dbReference type="GO" id="GO:0005829">
    <property type="term" value="C:cytosol"/>
    <property type="evidence" value="ECO:0000318"/>
    <property type="project" value="GO_Central"/>
</dbReference>
<dbReference type="GO" id="GO:0005525">
    <property type="term" value="F:GTP binding"/>
    <property type="evidence" value="ECO:0007669"/>
    <property type="project" value="UniProtKB-UniRule"/>
</dbReference>
<dbReference type="GO" id="GO:0003924">
    <property type="term" value="F:GTPase activity"/>
    <property type="evidence" value="ECO:0007669"/>
    <property type="project" value="UniProtKB-UniRule"/>
</dbReference>
<dbReference type="GO" id="GO:0046872">
    <property type="term" value="F:metal ion binding"/>
    <property type="evidence" value="ECO:0007669"/>
    <property type="project" value="UniProtKB-KW"/>
</dbReference>
<dbReference type="GO" id="GO:0030488">
    <property type="term" value="P:tRNA methylation"/>
    <property type="evidence" value="ECO:0000318"/>
    <property type="project" value="GO_Central"/>
</dbReference>
<dbReference type="GO" id="GO:0002098">
    <property type="term" value="P:tRNA wobble uridine modification"/>
    <property type="evidence" value="ECO:0000318"/>
    <property type="project" value="GO_Central"/>
</dbReference>
<dbReference type="CDD" id="cd04164">
    <property type="entry name" value="trmE"/>
    <property type="match status" value="1"/>
</dbReference>
<dbReference type="CDD" id="cd14858">
    <property type="entry name" value="TrmE_N"/>
    <property type="match status" value="1"/>
</dbReference>
<dbReference type="FunFam" id="3.30.1360.120:FF:000001">
    <property type="entry name" value="tRNA modification GTPase MnmE"/>
    <property type="match status" value="1"/>
</dbReference>
<dbReference type="FunFam" id="3.40.50.300:FF:000249">
    <property type="entry name" value="tRNA modification GTPase MnmE"/>
    <property type="match status" value="1"/>
</dbReference>
<dbReference type="Gene3D" id="3.40.50.300">
    <property type="entry name" value="P-loop containing nucleotide triphosphate hydrolases"/>
    <property type="match status" value="1"/>
</dbReference>
<dbReference type="Gene3D" id="3.30.1360.120">
    <property type="entry name" value="Probable tRNA modification gtpase trme, domain 1"/>
    <property type="match status" value="1"/>
</dbReference>
<dbReference type="Gene3D" id="1.20.120.430">
    <property type="entry name" value="tRNA modification GTPase MnmE domain 2"/>
    <property type="match status" value="1"/>
</dbReference>
<dbReference type="HAMAP" id="MF_00379">
    <property type="entry name" value="GTPase_MnmE"/>
    <property type="match status" value="1"/>
</dbReference>
<dbReference type="InterPro" id="IPR031168">
    <property type="entry name" value="G_TrmE"/>
</dbReference>
<dbReference type="InterPro" id="IPR006073">
    <property type="entry name" value="GTP-bd"/>
</dbReference>
<dbReference type="InterPro" id="IPR018948">
    <property type="entry name" value="GTP-bd_TrmE_N"/>
</dbReference>
<dbReference type="InterPro" id="IPR004520">
    <property type="entry name" value="GTPase_MnmE"/>
</dbReference>
<dbReference type="InterPro" id="IPR027368">
    <property type="entry name" value="MnmE_dom2"/>
</dbReference>
<dbReference type="InterPro" id="IPR025867">
    <property type="entry name" value="MnmE_helical"/>
</dbReference>
<dbReference type="InterPro" id="IPR027417">
    <property type="entry name" value="P-loop_NTPase"/>
</dbReference>
<dbReference type="InterPro" id="IPR005225">
    <property type="entry name" value="Small_GTP-bd"/>
</dbReference>
<dbReference type="InterPro" id="IPR027266">
    <property type="entry name" value="TrmE/GcvT_dom1"/>
</dbReference>
<dbReference type="NCBIfam" id="TIGR00450">
    <property type="entry name" value="mnmE_trmE_thdF"/>
    <property type="match status" value="1"/>
</dbReference>
<dbReference type="NCBIfam" id="NF003661">
    <property type="entry name" value="PRK05291.1-3"/>
    <property type="match status" value="1"/>
</dbReference>
<dbReference type="NCBIfam" id="TIGR00231">
    <property type="entry name" value="small_GTP"/>
    <property type="match status" value="1"/>
</dbReference>
<dbReference type="PANTHER" id="PTHR42714">
    <property type="entry name" value="TRNA MODIFICATION GTPASE GTPBP3"/>
    <property type="match status" value="1"/>
</dbReference>
<dbReference type="PANTHER" id="PTHR42714:SF2">
    <property type="entry name" value="TRNA MODIFICATION GTPASE GTPBP3, MITOCHONDRIAL"/>
    <property type="match status" value="1"/>
</dbReference>
<dbReference type="Pfam" id="PF01926">
    <property type="entry name" value="MMR_HSR1"/>
    <property type="match status" value="1"/>
</dbReference>
<dbReference type="Pfam" id="PF12631">
    <property type="entry name" value="MnmE_helical"/>
    <property type="match status" value="1"/>
</dbReference>
<dbReference type="Pfam" id="PF10396">
    <property type="entry name" value="TrmE_N"/>
    <property type="match status" value="1"/>
</dbReference>
<dbReference type="SUPFAM" id="SSF52540">
    <property type="entry name" value="P-loop containing nucleoside triphosphate hydrolases"/>
    <property type="match status" value="1"/>
</dbReference>
<dbReference type="SUPFAM" id="SSF116878">
    <property type="entry name" value="TrmE connector domain"/>
    <property type="match status" value="1"/>
</dbReference>
<dbReference type="PROSITE" id="PS51709">
    <property type="entry name" value="G_TRME"/>
    <property type="match status" value="1"/>
</dbReference>
<accession>Q8ZKY3</accession>
<reference key="1">
    <citation type="journal article" date="2001" name="Nature">
        <title>Complete genome sequence of Salmonella enterica serovar Typhimurium LT2.</title>
        <authorList>
            <person name="McClelland M."/>
            <person name="Sanderson K.E."/>
            <person name="Spieth J."/>
            <person name="Clifton S.W."/>
            <person name="Latreille P."/>
            <person name="Courtney L."/>
            <person name="Porwollik S."/>
            <person name="Ali J."/>
            <person name="Dante M."/>
            <person name="Du F."/>
            <person name="Hou S."/>
            <person name="Layman D."/>
            <person name="Leonard S."/>
            <person name="Nguyen C."/>
            <person name="Scott K."/>
            <person name="Holmes A."/>
            <person name="Grewal N."/>
            <person name="Mulvaney E."/>
            <person name="Ryan E."/>
            <person name="Sun H."/>
            <person name="Florea L."/>
            <person name="Miller W."/>
            <person name="Stoneking T."/>
            <person name="Nhan M."/>
            <person name="Waterston R."/>
            <person name="Wilson R.K."/>
        </authorList>
    </citation>
    <scope>NUCLEOTIDE SEQUENCE [LARGE SCALE GENOMIC DNA]</scope>
    <source>
        <strain>LT2 / SGSC1412 / ATCC 700720</strain>
    </source>
</reference>
<proteinExistence type="inferred from homology"/>
<protein>
    <recommendedName>
        <fullName evidence="1">tRNA modification GTPase MnmE</fullName>
        <ecNumber evidence="1">3.6.-.-</ecNumber>
    </recommendedName>
</protein>
<name>MNME_SALTY</name>
<organism>
    <name type="scientific">Salmonella typhimurium (strain LT2 / SGSC1412 / ATCC 700720)</name>
    <dbReference type="NCBI Taxonomy" id="99287"/>
    <lineage>
        <taxon>Bacteria</taxon>
        <taxon>Pseudomonadati</taxon>
        <taxon>Pseudomonadota</taxon>
        <taxon>Gammaproteobacteria</taxon>
        <taxon>Enterobacterales</taxon>
        <taxon>Enterobacteriaceae</taxon>
        <taxon>Salmonella</taxon>
    </lineage>
</organism>
<gene>
    <name evidence="1" type="primary">mnmE</name>
    <name evidence="1" type="synonym">trmE</name>
    <name type="ordered locus">STM3843</name>
</gene>
<feature type="chain" id="PRO_0000188912" description="tRNA modification GTPase MnmE">
    <location>
        <begin position="1"/>
        <end position="454"/>
    </location>
</feature>
<feature type="domain" description="TrmE-type G">
    <location>
        <begin position="216"/>
        <end position="377"/>
    </location>
</feature>
<feature type="binding site" evidence="1">
    <location>
        <position position="23"/>
    </location>
    <ligand>
        <name>(6S)-5-formyl-5,6,7,8-tetrahydrofolate</name>
        <dbReference type="ChEBI" id="CHEBI:57457"/>
    </ligand>
</feature>
<feature type="binding site" evidence="1">
    <location>
        <position position="80"/>
    </location>
    <ligand>
        <name>(6S)-5-formyl-5,6,7,8-tetrahydrofolate</name>
        <dbReference type="ChEBI" id="CHEBI:57457"/>
    </ligand>
</feature>
<feature type="binding site" evidence="1">
    <location>
        <position position="120"/>
    </location>
    <ligand>
        <name>(6S)-5-formyl-5,6,7,8-tetrahydrofolate</name>
        <dbReference type="ChEBI" id="CHEBI:57457"/>
    </ligand>
</feature>
<feature type="binding site" evidence="1">
    <location>
        <begin position="226"/>
        <end position="231"/>
    </location>
    <ligand>
        <name>GTP</name>
        <dbReference type="ChEBI" id="CHEBI:37565"/>
    </ligand>
</feature>
<feature type="binding site" evidence="1">
    <location>
        <position position="226"/>
    </location>
    <ligand>
        <name>K(+)</name>
        <dbReference type="ChEBI" id="CHEBI:29103"/>
    </ligand>
</feature>
<feature type="binding site" evidence="1">
    <location>
        <position position="230"/>
    </location>
    <ligand>
        <name>Mg(2+)</name>
        <dbReference type="ChEBI" id="CHEBI:18420"/>
    </ligand>
</feature>
<feature type="binding site" evidence="1">
    <location>
        <begin position="245"/>
        <end position="251"/>
    </location>
    <ligand>
        <name>GTP</name>
        <dbReference type="ChEBI" id="CHEBI:37565"/>
    </ligand>
</feature>
<feature type="binding site" evidence="1">
    <location>
        <position position="245"/>
    </location>
    <ligand>
        <name>K(+)</name>
        <dbReference type="ChEBI" id="CHEBI:29103"/>
    </ligand>
</feature>
<feature type="binding site" evidence="1">
    <location>
        <position position="247"/>
    </location>
    <ligand>
        <name>K(+)</name>
        <dbReference type="ChEBI" id="CHEBI:29103"/>
    </ligand>
</feature>
<feature type="binding site" evidence="1">
    <location>
        <position position="250"/>
    </location>
    <ligand>
        <name>K(+)</name>
        <dbReference type="ChEBI" id="CHEBI:29103"/>
    </ligand>
</feature>
<feature type="binding site" evidence="1">
    <location>
        <position position="251"/>
    </location>
    <ligand>
        <name>Mg(2+)</name>
        <dbReference type="ChEBI" id="CHEBI:18420"/>
    </ligand>
</feature>
<feature type="binding site" evidence="1">
    <location>
        <begin position="270"/>
        <end position="273"/>
    </location>
    <ligand>
        <name>GTP</name>
        <dbReference type="ChEBI" id="CHEBI:37565"/>
    </ligand>
</feature>
<feature type="binding site" evidence="1">
    <location>
        <begin position="335"/>
        <end position="338"/>
    </location>
    <ligand>
        <name>GTP</name>
        <dbReference type="ChEBI" id="CHEBI:37565"/>
    </ligand>
</feature>
<feature type="binding site" evidence="1">
    <location>
        <begin position="358"/>
        <end position="360"/>
    </location>
    <ligand>
        <name>GTP</name>
        <dbReference type="ChEBI" id="CHEBI:37565"/>
    </ligand>
</feature>
<feature type="binding site" evidence="1">
    <location>
        <position position="454"/>
    </location>
    <ligand>
        <name>(6S)-5-formyl-5,6,7,8-tetrahydrofolate</name>
        <dbReference type="ChEBI" id="CHEBI:57457"/>
    </ligand>
</feature>